<protein>
    <recommendedName>
        <fullName evidence="3">Gamma-soluble NSF attachment protein</fullName>
        <shortName evidence="3">SNAP-gamma</shortName>
    </recommendedName>
    <alternativeName>
        <fullName evidence="9">N-ethylmaleimide-sensitive factor attachment protein gamma</fullName>
    </alternativeName>
</protein>
<dbReference type="EMBL" id="AK010275">
    <property type="protein sequence ID" value="BAB26812.1"/>
    <property type="molecule type" value="mRNA"/>
</dbReference>
<dbReference type="EMBL" id="AK154573">
    <property type="protein sequence ID" value="BAE32685.1"/>
    <property type="molecule type" value="mRNA"/>
</dbReference>
<dbReference type="EMBL" id="AK164149">
    <property type="protein sequence ID" value="BAE37651.1"/>
    <property type="molecule type" value="mRNA"/>
</dbReference>
<dbReference type="EMBL" id="AK167372">
    <property type="protein sequence ID" value="BAE39468.1"/>
    <property type="molecule type" value="mRNA"/>
</dbReference>
<dbReference type="EMBL" id="BC026977">
    <property type="protein sequence ID" value="AAH26977.1"/>
    <property type="molecule type" value="mRNA"/>
</dbReference>
<dbReference type="CCDS" id="CCDS29295.1"/>
<dbReference type="RefSeq" id="NP_082293.1">
    <property type="nucleotide sequence ID" value="NM_028017.2"/>
</dbReference>
<dbReference type="SMR" id="Q9CWZ7"/>
<dbReference type="BioGRID" id="223846">
    <property type="interactions" value="6"/>
</dbReference>
<dbReference type="FunCoup" id="Q9CWZ7">
    <property type="interactions" value="2472"/>
</dbReference>
<dbReference type="IntAct" id="Q9CWZ7">
    <property type="interactions" value="1"/>
</dbReference>
<dbReference type="MINT" id="Q9CWZ7"/>
<dbReference type="STRING" id="10090.ENSMUSP00000025474"/>
<dbReference type="GlyGen" id="Q9CWZ7">
    <property type="glycosylation" value="1 site, 1 N-linked glycan (1 site)"/>
</dbReference>
<dbReference type="iPTMnet" id="Q9CWZ7"/>
<dbReference type="PhosphoSitePlus" id="Q9CWZ7"/>
<dbReference type="SwissPalm" id="Q9CWZ7"/>
<dbReference type="jPOST" id="Q9CWZ7"/>
<dbReference type="PaxDb" id="10090-ENSMUSP00000025474"/>
<dbReference type="PeptideAtlas" id="Q9CWZ7"/>
<dbReference type="ProteomicsDB" id="261590"/>
<dbReference type="Pumba" id="Q9CWZ7"/>
<dbReference type="Antibodypedia" id="2189">
    <property type="antibodies" value="179 antibodies from 28 providers"/>
</dbReference>
<dbReference type="Ensembl" id="ENSMUST00000025474.14">
    <property type="protein sequence ID" value="ENSMUSP00000025474.7"/>
    <property type="gene ID" value="ENSMUSG00000024581.14"/>
</dbReference>
<dbReference type="GeneID" id="108123"/>
<dbReference type="KEGG" id="mmu:108123"/>
<dbReference type="UCSC" id="uc008fdp.2">
    <property type="organism name" value="mouse"/>
</dbReference>
<dbReference type="AGR" id="MGI:104561"/>
<dbReference type="CTD" id="8774"/>
<dbReference type="MGI" id="MGI:104561">
    <property type="gene designation" value="Napg"/>
</dbReference>
<dbReference type="VEuPathDB" id="HostDB:ENSMUSG00000024581"/>
<dbReference type="eggNOG" id="KOG1585">
    <property type="taxonomic scope" value="Eukaryota"/>
</dbReference>
<dbReference type="GeneTree" id="ENSGT00390000005826"/>
<dbReference type="HOGENOM" id="CLU_063974_1_0_1"/>
<dbReference type="InParanoid" id="Q9CWZ7"/>
<dbReference type="OMA" id="RSWFHAA"/>
<dbReference type="OrthoDB" id="26569at2759"/>
<dbReference type="PhylomeDB" id="Q9CWZ7"/>
<dbReference type="TreeFam" id="TF312872"/>
<dbReference type="Reactome" id="R-MMU-204005">
    <property type="pathway name" value="COPII-mediated vesicle transport"/>
</dbReference>
<dbReference type="Reactome" id="R-MMU-6807878">
    <property type="pathway name" value="COPI-mediated anterograde transport"/>
</dbReference>
<dbReference type="Reactome" id="R-MMU-6811434">
    <property type="pathway name" value="COPI-dependent Golgi-to-ER retrograde traffic"/>
</dbReference>
<dbReference type="Reactome" id="R-MMU-6811438">
    <property type="pathway name" value="Intra-Golgi traffic"/>
</dbReference>
<dbReference type="Reactome" id="R-MMU-6811440">
    <property type="pathway name" value="Retrograde transport at the Trans-Golgi-Network"/>
</dbReference>
<dbReference type="BioGRID-ORCS" id="108123">
    <property type="hits" value="2 hits in 77 CRISPR screens"/>
</dbReference>
<dbReference type="CD-CODE" id="CE726F99">
    <property type="entry name" value="Postsynaptic density"/>
</dbReference>
<dbReference type="ChiTaRS" id="Napg">
    <property type="organism name" value="mouse"/>
</dbReference>
<dbReference type="PRO" id="PR:Q9CWZ7"/>
<dbReference type="Proteomes" id="UP000000589">
    <property type="component" value="Chromosome 18"/>
</dbReference>
<dbReference type="RNAct" id="Q9CWZ7">
    <property type="molecule type" value="protein"/>
</dbReference>
<dbReference type="Bgee" id="ENSMUSG00000024581">
    <property type="expression patterns" value="Expressed in retrosplenial region and 254 other cell types or tissues"/>
</dbReference>
<dbReference type="ExpressionAtlas" id="Q9CWZ7">
    <property type="expression patterns" value="baseline and differential"/>
</dbReference>
<dbReference type="GO" id="GO:0005794">
    <property type="term" value="C:Golgi apparatus"/>
    <property type="evidence" value="ECO:0007669"/>
    <property type="project" value="UniProtKB-SubCell"/>
</dbReference>
<dbReference type="GO" id="GO:0016020">
    <property type="term" value="C:membrane"/>
    <property type="evidence" value="ECO:0007669"/>
    <property type="project" value="UniProtKB-SubCell"/>
</dbReference>
<dbReference type="GO" id="GO:0005739">
    <property type="term" value="C:mitochondrion"/>
    <property type="evidence" value="ECO:0007669"/>
    <property type="project" value="Ensembl"/>
</dbReference>
<dbReference type="GO" id="GO:0043209">
    <property type="term" value="C:myelin sheath"/>
    <property type="evidence" value="ECO:0007005"/>
    <property type="project" value="UniProtKB"/>
</dbReference>
<dbReference type="GO" id="GO:0045202">
    <property type="term" value="C:synapse"/>
    <property type="evidence" value="ECO:0007669"/>
    <property type="project" value="Ensembl"/>
</dbReference>
<dbReference type="GO" id="GO:0006886">
    <property type="term" value="P:intracellular protein transport"/>
    <property type="evidence" value="ECO:0007669"/>
    <property type="project" value="InterPro"/>
</dbReference>
<dbReference type="GO" id="GO:0016192">
    <property type="term" value="P:vesicle-mediated transport"/>
    <property type="evidence" value="ECO:0007669"/>
    <property type="project" value="UniProtKB-KW"/>
</dbReference>
<dbReference type="CDD" id="cd15832">
    <property type="entry name" value="SNAP"/>
    <property type="match status" value="1"/>
</dbReference>
<dbReference type="FunFam" id="1.25.40.10:FF:000115">
    <property type="entry name" value="Gamma-soluble NSF attachment protein"/>
    <property type="match status" value="1"/>
</dbReference>
<dbReference type="Gene3D" id="1.25.40.10">
    <property type="entry name" value="Tetratricopeptide repeat domain"/>
    <property type="match status" value="1"/>
</dbReference>
<dbReference type="InterPro" id="IPR000744">
    <property type="entry name" value="NSF_attach"/>
</dbReference>
<dbReference type="InterPro" id="IPR011990">
    <property type="entry name" value="TPR-like_helical_dom_sf"/>
</dbReference>
<dbReference type="PANTHER" id="PTHR13768:SF2">
    <property type="entry name" value="GAMMA-SOLUBLE NSF ATTACHMENT PROTEIN"/>
    <property type="match status" value="1"/>
</dbReference>
<dbReference type="PANTHER" id="PTHR13768">
    <property type="entry name" value="SOLUBLE NSF ATTACHMENT PROTEIN SNAP"/>
    <property type="match status" value="1"/>
</dbReference>
<dbReference type="Pfam" id="PF14938">
    <property type="entry name" value="SNAP"/>
    <property type="match status" value="1"/>
</dbReference>
<dbReference type="SUPFAM" id="SSF48452">
    <property type="entry name" value="TPR-like"/>
    <property type="match status" value="1"/>
</dbReference>
<comment type="function">
    <text evidence="1">Required for vesicular transport between the endoplasmic reticulum and the Golgi apparatus.</text>
</comment>
<comment type="subunit">
    <text evidence="3 6">Interacts with RAB11FIP5 (By similarity). Interacts with VTI1A (PubMed:9705316).</text>
</comment>
<comment type="subcellular location">
    <subcellularLocation>
        <location evidence="2">Membrane</location>
        <topology evidence="2">Peripheral membrane protein</topology>
    </subcellularLocation>
    <subcellularLocation>
        <location evidence="6">Golgi apparatus</location>
    </subcellularLocation>
</comment>
<comment type="tissue specificity">
    <text evidence="5">Abundantly expressed in the heart, liver and kidneys with lower expression in the brain, spleen, lung, muscle and testes.</text>
</comment>
<comment type="similarity">
    <text evidence="8">Belongs to the SNAP family.</text>
</comment>
<keyword id="KW-0931">ER-Golgi transport</keyword>
<keyword id="KW-0333">Golgi apparatus</keyword>
<keyword id="KW-0472">Membrane</keyword>
<keyword id="KW-0597">Phosphoprotein</keyword>
<keyword id="KW-0653">Protein transport</keyword>
<keyword id="KW-1185">Reference proteome</keyword>
<keyword id="KW-0813">Transport</keyword>
<evidence type="ECO:0000250" key="1"/>
<evidence type="ECO:0000250" key="2">
    <source>
        <dbReference type="UniProtKB" id="P81127"/>
    </source>
</evidence>
<evidence type="ECO:0000250" key="3">
    <source>
        <dbReference type="UniProtKB" id="Q99747"/>
    </source>
</evidence>
<evidence type="ECO:0000256" key="4">
    <source>
        <dbReference type="SAM" id="MobiDB-lite"/>
    </source>
</evidence>
<evidence type="ECO:0000269" key="5">
    <source>
    </source>
</evidence>
<evidence type="ECO:0000269" key="6">
    <source>
    </source>
</evidence>
<evidence type="ECO:0000303" key="7">
    <source>
    </source>
</evidence>
<evidence type="ECO:0000305" key="8"/>
<evidence type="ECO:0000312" key="9">
    <source>
        <dbReference type="MGI" id="MGI:104561"/>
    </source>
</evidence>
<evidence type="ECO:0007744" key="10">
    <source>
    </source>
</evidence>
<proteinExistence type="evidence at protein level"/>
<name>SNAG_MOUSE</name>
<sequence>MAAQKINEGLEHLAKAEKYLKTGFLKWKPDYDSAASEYGKAAVAFKNAKQFEQAKDACLREAVAHENNRALFHAAKAYEQAGMMLKEMQKLPEAVQLIEKASMMYLENGTPDTAAMALERAGKLIENVDPEKAVQLYQQTANVFENEERLRQAVELLGKASRLLVRGRRFDEAALSIQKEKNIYKEIENYPTCYKKTIAQVLVHLHRNDYVAAERCVRESYSIPGFNGSEDCAALEQLLEGYDQQDQDQVSEVCNSPLFKYMDNDYAKLGLSLVVPGGGIKKKSPATPQAKPDGAAGMAAEEEEDEYSGGLC</sequence>
<organism>
    <name type="scientific">Mus musculus</name>
    <name type="common">Mouse</name>
    <dbReference type="NCBI Taxonomy" id="10090"/>
    <lineage>
        <taxon>Eukaryota</taxon>
        <taxon>Metazoa</taxon>
        <taxon>Chordata</taxon>
        <taxon>Craniata</taxon>
        <taxon>Vertebrata</taxon>
        <taxon>Euteleostomi</taxon>
        <taxon>Mammalia</taxon>
        <taxon>Eutheria</taxon>
        <taxon>Euarchontoglires</taxon>
        <taxon>Glires</taxon>
        <taxon>Rodentia</taxon>
        <taxon>Myomorpha</taxon>
        <taxon>Muroidea</taxon>
        <taxon>Muridae</taxon>
        <taxon>Murinae</taxon>
        <taxon>Mus</taxon>
        <taxon>Mus</taxon>
    </lineage>
</organism>
<gene>
    <name evidence="9" type="primary">Napg</name>
    <name evidence="7" type="synonym">Snapg</name>
</gene>
<accession>Q9CWZ7</accession>
<accession>Q3TPT4</accession>
<feature type="chain" id="PRO_0000219064" description="Gamma-soluble NSF attachment protein">
    <location>
        <begin position="1"/>
        <end position="312"/>
    </location>
</feature>
<feature type="region of interest" description="Disordered" evidence="4">
    <location>
        <begin position="281"/>
        <end position="312"/>
    </location>
</feature>
<feature type="compositionally biased region" description="Acidic residues" evidence="4">
    <location>
        <begin position="300"/>
        <end position="312"/>
    </location>
</feature>
<feature type="modified residue" description="Phosphoserine" evidence="10">
    <location>
        <position position="284"/>
    </location>
</feature>
<feature type="modified residue" description="Phosphothreonine" evidence="10">
    <location>
        <position position="287"/>
    </location>
</feature>
<feature type="modified residue" description="Phosphoserine" evidence="10">
    <location>
        <position position="308"/>
    </location>
</feature>
<reference key="1">
    <citation type="journal article" date="2005" name="Science">
        <title>The transcriptional landscape of the mammalian genome.</title>
        <authorList>
            <person name="Carninci P."/>
            <person name="Kasukawa T."/>
            <person name="Katayama S."/>
            <person name="Gough J."/>
            <person name="Frith M.C."/>
            <person name="Maeda N."/>
            <person name="Oyama R."/>
            <person name="Ravasi T."/>
            <person name="Lenhard B."/>
            <person name="Wells C."/>
            <person name="Kodzius R."/>
            <person name="Shimokawa K."/>
            <person name="Bajic V.B."/>
            <person name="Brenner S.E."/>
            <person name="Batalov S."/>
            <person name="Forrest A.R."/>
            <person name="Zavolan M."/>
            <person name="Davis M.J."/>
            <person name="Wilming L.G."/>
            <person name="Aidinis V."/>
            <person name="Allen J.E."/>
            <person name="Ambesi-Impiombato A."/>
            <person name="Apweiler R."/>
            <person name="Aturaliya R.N."/>
            <person name="Bailey T.L."/>
            <person name="Bansal M."/>
            <person name="Baxter L."/>
            <person name="Beisel K.W."/>
            <person name="Bersano T."/>
            <person name="Bono H."/>
            <person name="Chalk A.M."/>
            <person name="Chiu K.P."/>
            <person name="Choudhary V."/>
            <person name="Christoffels A."/>
            <person name="Clutterbuck D.R."/>
            <person name="Crowe M.L."/>
            <person name="Dalla E."/>
            <person name="Dalrymple B.P."/>
            <person name="de Bono B."/>
            <person name="Della Gatta G."/>
            <person name="di Bernardo D."/>
            <person name="Down T."/>
            <person name="Engstrom P."/>
            <person name="Fagiolini M."/>
            <person name="Faulkner G."/>
            <person name="Fletcher C.F."/>
            <person name="Fukushima T."/>
            <person name="Furuno M."/>
            <person name="Futaki S."/>
            <person name="Gariboldi M."/>
            <person name="Georgii-Hemming P."/>
            <person name="Gingeras T.R."/>
            <person name="Gojobori T."/>
            <person name="Green R.E."/>
            <person name="Gustincich S."/>
            <person name="Harbers M."/>
            <person name="Hayashi Y."/>
            <person name="Hensch T.K."/>
            <person name="Hirokawa N."/>
            <person name="Hill D."/>
            <person name="Huminiecki L."/>
            <person name="Iacono M."/>
            <person name="Ikeo K."/>
            <person name="Iwama A."/>
            <person name="Ishikawa T."/>
            <person name="Jakt M."/>
            <person name="Kanapin A."/>
            <person name="Katoh M."/>
            <person name="Kawasawa Y."/>
            <person name="Kelso J."/>
            <person name="Kitamura H."/>
            <person name="Kitano H."/>
            <person name="Kollias G."/>
            <person name="Krishnan S.P."/>
            <person name="Kruger A."/>
            <person name="Kummerfeld S.K."/>
            <person name="Kurochkin I.V."/>
            <person name="Lareau L.F."/>
            <person name="Lazarevic D."/>
            <person name="Lipovich L."/>
            <person name="Liu J."/>
            <person name="Liuni S."/>
            <person name="McWilliam S."/>
            <person name="Madan Babu M."/>
            <person name="Madera M."/>
            <person name="Marchionni L."/>
            <person name="Matsuda H."/>
            <person name="Matsuzawa S."/>
            <person name="Miki H."/>
            <person name="Mignone F."/>
            <person name="Miyake S."/>
            <person name="Morris K."/>
            <person name="Mottagui-Tabar S."/>
            <person name="Mulder N."/>
            <person name="Nakano N."/>
            <person name="Nakauchi H."/>
            <person name="Ng P."/>
            <person name="Nilsson R."/>
            <person name="Nishiguchi S."/>
            <person name="Nishikawa S."/>
            <person name="Nori F."/>
            <person name="Ohara O."/>
            <person name="Okazaki Y."/>
            <person name="Orlando V."/>
            <person name="Pang K.C."/>
            <person name="Pavan W.J."/>
            <person name="Pavesi G."/>
            <person name="Pesole G."/>
            <person name="Petrovsky N."/>
            <person name="Piazza S."/>
            <person name="Reed J."/>
            <person name="Reid J.F."/>
            <person name="Ring B.Z."/>
            <person name="Ringwald M."/>
            <person name="Rost B."/>
            <person name="Ruan Y."/>
            <person name="Salzberg S.L."/>
            <person name="Sandelin A."/>
            <person name="Schneider C."/>
            <person name="Schoenbach C."/>
            <person name="Sekiguchi K."/>
            <person name="Semple C.A."/>
            <person name="Seno S."/>
            <person name="Sessa L."/>
            <person name="Sheng Y."/>
            <person name="Shibata Y."/>
            <person name="Shimada H."/>
            <person name="Shimada K."/>
            <person name="Silva D."/>
            <person name="Sinclair B."/>
            <person name="Sperling S."/>
            <person name="Stupka E."/>
            <person name="Sugiura K."/>
            <person name="Sultana R."/>
            <person name="Takenaka Y."/>
            <person name="Taki K."/>
            <person name="Tammoja K."/>
            <person name="Tan S.L."/>
            <person name="Tang S."/>
            <person name="Taylor M.S."/>
            <person name="Tegner J."/>
            <person name="Teichmann S.A."/>
            <person name="Ueda H.R."/>
            <person name="van Nimwegen E."/>
            <person name="Verardo R."/>
            <person name="Wei C.L."/>
            <person name="Yagi K."/>
            <person name="Yamanishi H."/>
            <person name="Zabarovsky E."/>
            <person name="Zhu S."/>
            <person name="Zimmer A."/>
            <person name="Hide W."/>
            <person name="Bult C."/>
            <person name="Grimmond S.M."/>
            <person name="Teasdale R.D."/>
            <person name="Liu E.T."/>
            <person name="Brusic V."/>
            <person name="Quackenbush J."/>
            <person name="Wahlestedt C."/>
            <person name="Mattick J.S."/>
            <person name="Hume D.A."/>
            <person name="Kai C."/>
            <person name="Sasaki D."/>
            <person name="Tomaru Y."/>
            <person name="Fukuda S."/>
            <person name="Kanamori-Katayama M."/>
            <person name="Suzuki M."/>
            <person name="Aoki J."/>
            <person name="Arakawa T."/>
            <person name="Iida J."/>
            <person name="Imamura K."/>
            <person name="Itoh M."/>
            <person name="Kato T."/>
            <person name="Kawaji H."/>
            <person name="Kawagashira N."/>
            <person name="Kawashima T."/>
            <person name="Kojima M."/>
            <person name="Kondo S."/>
            <person name="Konno H."/>
            <person name="Nakano K."/>
            <person name="Ninomiya N."/>
            <person name="Nishio T."/>
            <person name="Okada M."/>
            <person name="Plessy C."/>
            <person name="Shibata K."/>
            <person name="Shiraki T."/>
            <person name="Suzuki S."/>
            <person name="Tagami M."/>
            <person name="Waki K."/>
            <person name="Watahiki A."/>
            <person name="Okamura-Oho Y."/>
            <person name="Suzuki H."/>
            <person name="Kawai J."/>
            <person name="Hayashizaki Y."/>
        </authorList>
    </citation>
    <scope>NUCLEOTIDE SEQUENCE [LARGE SCALE MRNA]</scope>
    <source>
        <strain>C57BL/6J</strain>
        <strain>NOD</strain>
        <tissue>Embryonic stem cell</tissue>
    </source>
</reference>
<reference key="2">
    <citation type="journal article" date="2004" name="Genome Res.">
        <title>The status, quality, and expansion of the NIH full-length cDNA project: the Mammalian Gene Collection (MGC).</title>
        <authorList>
            <consortium name="The MGC Project Team"/>
        </authorList>
    </citation>
    <scope>NUCLEOTIDE SEQUENCE [LARGE SCALE MRNA]</scope>
    <source>
        <strain>C57BL/6J</strain>
        <tissue>Retina</tissue>
    </source>
</reference>
<reference key="3">
    <citation type="journal article" date="1993" name="Nature">
        <title>SNAP family of NSF attachment proteins includes a brain-specific isoform.</title>
        <authorList>
            <person name="Whiteheart S.W."/>
            <person name="Griff I.C."/>
            <person name="Brunner M."/>
            <person name="Clary D.O."/>
            <person name="Mayer T."/>
            <person name="Buhrow S.A."/>
            <person name="Rothman J.E."/>
        </authorList>
    </citation>
    <scope>TISSUE SPECIFICITY</scope>
</reference>
<reference key="4">
    <citation type="journal article" date="1998" name="J. Biol. Chem.">
        <title>A 29-kilodalton Golgi soluble N-ethylmaleimide-sensitive factor attachment protein receptor (Vti1-rp2) implicated in protein trafficking in the secretory pathway.</title>
        <authorList>
            <person name="Xu Y."/>
            <person name="Wong S.H."/>
            <person name="Tang B.L."/>
            <person name="Subramaniam V.N."/>
            <person name="Zhang T."/>
            <person name="Hong W."/>
        </authorList>
    </citation>
    <scope>INTERACTION WITH VTI1A</scope>
    <scope>SUBCELLULAR LOCATION</scope>
</reference>
<reference key="5">
    <citation type="journal article" date="2010" name="Cell">
        <title>A tissue-specific atlas of mouse protein phosphorylation and expression.</title>
        <authorList>
            <person name="Huttlin E.L."/>
            <person name="Jedrychowski M.P."/>
            <person name="Elias J.E."/>
            <person name="Goswami T."/>
            <person name="Rad R."/>
            <person name="Beausoleil S.A."/>
            <person name="Villen J."/>
            <person name="Haas W."/>
            <person name="Sowa M.E."/>
            <person name="Gygi S.P."/>
        </authorList>
    </citation>
    <scope>PHOSPHORYLATION [LARGE SCALE ANALYSIS] AT SER-284; THR-287 AND SER-308</scope>
    <scope>IDENTIFICATION BY MASS SPECTROMETRY [LARGE SCALE ANALYSIS]</scope>
    <source>
        <tissue>Brain</tissue>
        <tissue>Heart</tissue>
        <tissue>Kidney</tissue>
        <tissue>Liver</tissue>
        <tissue>Lung</tissue>
        <tissue>Pancreas</tissue>
        <tissue>Spleen</tissue>
        <tissue>Testis</tissue>
    </source>
</reference>